<evidence type="ECO:0000255" key="1"/>
<evidence type="ECO:0000269" key="2">
    <source>
    </source>
</evidence>
<evidence type="ECO:0000303" key="3">
    <source>
    </source>
</evidence>
<evidence type="ECO:0000305" key="4"/>
<keyword id="KW-0027">Amidation</keyword>
<keyword id="KW-0903">Direct protein sequencing</keyword>
<keyword id="KW-0527">Neuropeptide</keyword>
<keyword id="KW-0964">Secreted</keyword>
<feature type="peptide" id="PRO_0000378840" description="Periviscerokinin-3" evidence="2">
    <location>
        <begin position="1"/>
        <end position="11"/>
    </location>
</feature>
<feature type="modified residue" description="Valine amide" evidence="2">
    <location>
        <position position="11"/>
    </location>
</feature>
<name>PVK3_LUCSU</name>
<accession>P85668</accession>
<organism>
    <name type="scientific">Lucihormetica subcincta</name>
    <name type="common">Glow spot roach</name>
    <dbReference type="NCBI Taxonomy" id="406666"/>
    <lineage>
        <taxon>Eukaryota</taxon>
        <taxon>Metazoa</taxon>
        <taxon>Ecdysozoa</taxon>
        <taxon>Arthropoda</taxon>
        <taxon>Hexapoda</taxon>
        <taxon>Insecta</taxon>
        <taxon>Pterygota</taxon>
        <taxon>Neoptera</taxon>
        <taxon>Polyneoptera</taxon>
        <taxon>Dictyoptera</taxon>
        <taxon>Blattodea</taxon>
        <taxon>Blaberoidea</taxon>
        <taxon>Blaberidae</taxon>
        <taxon>Blaberinae</taxon>
        <taxon>Lucihormetica</taxon>
    </lineage>
</organism>
<sequence length="11" mass="1147">GSSGMIPFPRV</sequence>
<dbReference type="GO" id="GO:0005576">
    <property type="term" value="C:extracellular region"/>
    <property type="evidence" value="ECO:0007669"/>
    <property type="project" value="UniProtKB-SubCell"/>
</dbReference>
<dbReference type="GO" id="GO:0007218">
    <property type="term" value="P:neuropeptide signaling pathway"/>
    <property type="evidence" value="ECO:0007669"/>
    <property type="project" value="UniProtKB-KW"/>
</dbReference>
<dbReference type="InterPro" id="IPR013231">
    <property type="entry name" value="Periviscerokinin"/>
</dbReference>
<dbReference type="Pfam" id="PF08259">
    <property type="entry name" value="Periviscerokin"/>
    <property type="match status" value="1"/>
</dbReference>
<reference evidence="4" key="1">
    <citation type="journal article" date="2009" name="BMC Evol. Biol.">
        <title>A proteomic approach for studying insect phylogeny: CAPA peptides of ancient insect taxa (Dictyoptera, Blattoptera) as a test case.</title>
        <authorList>
            <person name="Roth S."/>
            <person name="Fromm B."/>
            <person name="Gaede G."/>
            <person name="Predel R."/>
        </authorList>
    </citation>
    <scope>PROTEIN SEQUENCE</scope>
    <scope>AMIDATION AT VAL-11</scope>
    <source>
        <tissue evidence="2">Abdominal perisympathetic organs</tissue>
    </source>
</reference>
<comment type="function">
    <text evidence="4">Mediates visceral muscle contractile activity (myotropic activity).</text>
</comment>
<comment type="subcellular location">
    <subcellularLocation>
        <location evidence="4">Secreted</location>
    </subcellularLocation>
</comment>
<comment type="similarity">
    <text evidence="1">Belongs to the periviscerokinin family.</text>
</comment>
<proteinExistence type="evidence at protein level"/>
<protein>
    <recommendedName>
        <fullName evidence="3">Periviscerokinin-3</fullName>
        <shortName evidence="3">LucSu-PVK-3</shortName>
    </recommendedName>
</protein>